<feature type="chain" id="PRO_0000304445" description="2-dehydro-3-deoxyphosphooctonate aldolase">
    <location>
        <begin position="1"/>
        <end position="280"/>
    </location>
</feature>
<reference key="1">
    <citation type="journal article" date="2005" name="Proc. Natl. Acad. Sci. U.S.A.">
        <title>The psychrophilic lifestyle as revealed by the genome sequence of Colwellia psychrerythraea 34H through genomic and proteomic analyses.</title>
        <authorList>
            <person name="Methe B.A."/>
            <person name="Nelson K.E."/>
            <person name="Deming J.W."/>
            <person name="Momen B."/>
            <person name="Melamud E."/>
            <person name="Zhang X."/>
            <person name="Moult J."/>
            <person name="Madupu R."/>
            <person name="Nelson W.C."/>
            <person name="Dodson R.J."/>
            <person name="Brinkac L.M."/>
            <person name="Daugherty S.C."/>
            <person name="Durkin A.S."/>
            <person name="DeBoy R.T."/>
            <person name="Kolonay J.F."/>
            <person name="Sullivan S.A."/>
            <person name="Zhou L."/>
            <person name="Davidsen T.M."/>
            <person name="Wu M."/>
            <person name="Huston A.L."/>
            <person name="Lewis M."/>
            <person name="Weaver B."/>
            <person name="Weidman J.F."/>
            <person name="Khouri H."/>
            <person name="Utterback T.R."/>
            <person name="Feldblyum T.V."/>
            <person name="Fraser C.M."/>
        </authorList>
    </citation>
    <scope>NUCLEOTIDE SEQUENCE [LARGE SCALE GENOMIC DNA]</scope>
    <source>
        <strain>34H / ATCC BAA-681</strain>
    </source>
</reference>
<protein>
    <recommendedName>
        <fullName evidence="1">2-dehydro-3-deoxyphosphooctonate aldolase</fullName>
        <ecNumber evidence="1">2.5.1.55</ecNumber>
    </recommendedName>
    <alternativeName>
        <fullName evidence="1">3-deoxy-D-manno-octulosonic acid 8-phosphate synthase</fullName>
    </alternativeName>
    <alternativeName>
        <fullName evidence="1">KDO-8-phosphate synthase</fullName>
        <shortName evidence="1">KDO 8-P synthase</shortName>
        <shortName evidence="1">KDOPS</shortName>
    </alternativeName>
    <alternativeName>
        <fullName evidence="1">Phospho-2-dehydro-3-deoxyoctonate aldolase</fullName>
    </alternativeName>
</protein>
<keyword id="KW-0963">Cytoplasm</keyword>
<keyword id="KW-0448">Lipopolysaccharide biosynthesis</keyword>
<keyword id="KW-0808">Transferase</keyword>
<organism>
    <name type="scientific">Colwellia psychrerythraea (strain 34H / ATCC BAA-681)</name>
    <name type="common">Vibrio psychroerythus</name>
    <dbReference type="NCBI Taxonomy" id="167879"/>
    <lineage>
        <taxon>Bacteria</taxon>
        <taxon>Pseudomonadati</taxon>
        <taxon>Pseudomonadota</taxon>
        <taxon>Gammaproteobacteria</taxon>
        <taxon>Alteromonadales</taxon>
        <taxon>Colwelliaceae</taxon>
        <taxon>Colwellia</taxon>
    </lineage>
</organism>
<gene>
    <name evidence="1" type="primary">kdsA</name>
    <name type="ordered locus">CPS_3547</name>
</gene>
<accession>Q47Y99</accession>
<proteinExistence type="inferred from homology"/>
<evidence type="ECO:0000255" key="1">
    <source>
        <dbReference type="HAMAP-Rule" id="MF_00056"/>
    </source>
</evidence>
<name>KDSA_COLP3</name>
<sequence>MTIKSVSVKGIDVANEQPFVLFGGMNVLESRDLAMKIAEHYVEVTQKLGIPYVFKASFDKANRSSVNSYRGPGLDEGLKIFEEIKSTFNVPIITDVHESYQAQPVSEVVDVIQLPAFLARQTDLVVAMAKTGAVINVKKPQFLAAHEMKHIITKFGEAGNENIILCERGSCYGYNNLVVDMLAMDEMKNYAPVIFDATHALQKPGGRSDSADGRRAQAAQLARSGMAIGIAGLFIEAHPDPSAAKCDGPCALPLDKLEPYLAQMKALDDLVKGFTPLITD</sequence>
<dbReference type="EC" id="2.5.1.55" evidence="1"/>
<dbReference type="EMBL" id="CP000083">
    <property type="protein sequence ID" value="AAZ26459.1"/>
    <property type="molecule type" value="Genomic_DNA"/>
</dbReference>
<dbReference type="SMR" id="Q47Y99"/>
<dbReference type="STRING" id="167879.CPS_3547"/>
<dbReference type="KEGG" id="cps:CPS_3547"/>
<dbReference type="eggNOG" id="COG2877">
    <property type="taxonomic scope" value="Bacteria"/>
</dbReference>
<dbReference type="HOGENOM" id="CLU_036666_0_0_6"/>
<dbReference type="UniPathway" id="UPA00030"/>
<dbReference type="UniPathway" id="UPA00357">
    <property type="reaction ID" value="UER00474"/>
</dbReference>
<dbReference type="Proteomes" id="UP000000547">
    <property type="component" value="Chromosome"/>
</dbReference>
<dbReference type="GO" id="GO:0005737">
    <property type="term" value="C:cytoplasm"/>
    <property type="evidence" value="ECO:0007669"/>
    <property type="project" value="UniProtKB-SubCell"/>
</dbReference>
<dbReference type="GO" id="GO:0008676">
    <property type="term" value="F:3-deoxy-8-phosphooctulonate synthase activity"/>
    <property type="evidence" value="ECO:0007669"/>
    <property type="project" value="UniProtKB-UniRule"/>
</dbReference>
<dbReference type="GO" id="GO:0019294">
    <property type="term" value="P:keto-3-deoxy-D-manno-octulosonic acid biosynthetic process"/>
    <property type="evidence" value="ECO:0007669"/>
    <property type="project" value="UniProtKB-UniRule"/>
</dbReference>
<dbReference type="Gene3D" id="3.20.20.70">
    <property type="entry name" value="Aldolase class I"/>
    <property type="match status" value="1"/>
</dbReference>
<dbReference type="HAMAP" id="MF_00056">
    <property type="entry name" value="KDO8P_synth"/>
    <property type="match status" value="1"/>
</dbReference>
<dbReference type="InterPro" id="IPR013785">
    <property type="entry name" value="Aldolase_TIM"/>
</dbReference>
<dbReference type="InterPro" id="IPR006218">
    <property type="entry name" value="DAHP1/KDSA"/>
</dbReference>
<dbReference type="InterPro" id="IPR006269">
    <property type="entry name" value="KDO8P_synthase"/>
</dbReference>
<dbReference type="NCBIfam" id="TIGR01362">
    <property type="entry name" value="KDO8P_synth"/>
    <property type="match status" value="1"/>
</dbReference>
<dbReference type="NCBIfam" id="NF003543">
    <property type="entry name" value="PRK05198.1"/>
    <property type="match status" value="1"/>
</dbReference>
<dbReference type="PANTHER" id="PTHR21057">
    <property type="entry name" value="PHOSPHO-2-DEHYDRO-3-DEOXYHEPTONATE ALDOLASE"/>
    <property type="match status" value="1"/>
</dbReference>
<dbReference type="Pfam" id="PF00793">
    <property type="entry name" value="DAHP_synth_1"/>
    <property type="match status" value="1"/>
</dbReference>
<dbReference type="SUPFAM" id="SSF51569">
    <property type="entry name" value="Aldolase"/>
    <property type="match status" value="1"/>
</dbReference>
<comment type="catalytic activity">
    <reaction evidence="1">
        <text>D-arabinose 5-phosphate + phosphoenolpyruvate + H2O = 3-deoxy-alpha-D-manno-2-octulosonate-8-phosphate + phosphate</text>
        <dbReference type="Rhea" id="RHEA:14053"/>
        <dbReference type="ChEBI" id="CHEBI:15377"/>
        <dbReference type="ChEBI" id="CHEBI:43474"/>
        <dbReference type="ChEBI" id="CHEBI:57693"/>
        <dbReference type="ChEBI" id="CHEBI:58702"/>
        <dbReference type="ChEBI" id="CHEBI:85985"/>
        <dbReference type="EC" id="2.5.1.55"/>
    </reaction>
</comment>
<comment type="pathway">
    <text evidence="1">Carbohydrate biosynthesis; 3-deoxy-D-manno-octulosonate biosynthesis; 3-deoxy-D-manno-octulosonate from D-ribulose 5-phosphate: step 2/3.</text>
</comment>
<comment type="pathway">
    <text evidence="1">Bacterial outer membrane biogenesis; lipopolysaccharide biosynthesis.</text>
</comment>
<comment type="subcellular location">
    <subcellularLocation>
        <location evidence="1">Cytoplasm</location>
    </subcellularLocation>
</comment>
<comment type="similarity">
    <text evidence="1">Belongs to the KdsA family.</text>
</comment>